<reference key="1">
    <citation type="journal article" date="1998" name="Mol. Biol. Evol.">
        <title>Microevolutionary divergence pattern of the segmentation gene hunchback in Drosophila.</title>
        <authorList>
            <person name="Tautz D."/>
            <person name="Nigro L."/>
        </authorList>
    </citation>
    <scope>NUCLEOTIDE SEQUENCE [GENOMIC DNA]</scope>
</reference>
<proteinExistence type="inferred from homology"/>
<organism>
    <name type="scientific">Drosophila orena</name>
    <name type="common">Fruit fly</name>
    <dbReference type="NCBI Taxonomy" id="7233"/>
    <lineage>
        <taxon>Eukaryota</taxon>
        <taxon>Metazoa</taxon>
        <taxon>Ecdysozoa</taxon>
        <taxon>Arthropoda</taxon>
        <taxon>Hexapoda</taxon>
        <taxon>Insecta</taxon>
        <taxon>Pterygota</taxon>
        <taxon>Neoptera</taxon>
        <taxon>Endopterygota</taxon>
        <taxon>Diptera</taxon>
        <taxon>Brachycera</taxon>
        <taxon>Muscomorpha</taxon>
        <taxon>Ephydroidea</taxon>
        <taxon>Drosophilidae</taxon>
        <taxon>Drosophila</taxon>
        <taxon>Sophophora</taxon>
    </lineage>
</organism>
<comment type="function">
    <text evidence="1">Gap class segmentation protein that controls development of head structures.</text>
</comment>
<comment type="subcellular location">
    <subcellularLocation>
        <location evidence="1">Nucleus</location>
    </subcellularLocation>
</comment>
<comment type="similarity">
    <text evidence="4">Belongs to the hunchback C2H2-type zinc-finger protein family.</text>
</comment>
<dbReference type="EMBL" id="AJ005375">
    <property type="protein sequence ID" value="CAA06505.1"/>
    <property type="molecule type" value="Genomic_DNA"/>
</dbReference>
<dbReference type="SMR" id="O62537"/>
<dbReference type="GO" id="GO:0005634">
    <property type="term" value="C:nucleus"/>
    <property type="evidence" value="ECO:0007669"/>
    <property type="project" value="UniProtKB-SubCell"/>
</dbReference>
<dbReference type="GO" id="GO:0003677">
    <property type="term" value="F:DNA binding"/>
    <property type="evidence" value="ECO:0007669"/>
    <property type="project" value="UniProtKB-KW"/>
</dbReference>
<dbReference type="GO" id="GO:0008270">
    <property type="term" value="F:zinc ion binding"/>
    <property type="evidence" value="ECO:0007669"/>
    <property type="project" value="UniProtKB-KW"/>
</dbReference>
<dbReference type="GO" id="GO:0035282">
    <property type="term" value="P:segmentation"/>
    <property type="evidence" value="ECO:0007669"/>
    <property type="project" value="UniProtKB-KW"/>
</dbReference>
<dbReference type="FunFam" id="3.30.160.60:FF:001301">
    <property type="entry name" value="Blast:Protein hunchback"/>
    <property type="match status" value="1"/>
</dbReference>
<dbReference type="FunFam" id="3.30.160.60:FF:001482">
    <property type="entry name" value="Hunchback"/>
    <property type="match status" value="1"/>
</dbReference>
<dbReference type="Gene3D" id="3.30.160.60">
    <property type="entry name" value="Classic Zinc Finger"/>
    <property type="match status" value="3"/>
</dbReference>
<dbReference type="InterPro" id="IPR036236">
    <property type="entry name" value="Znf_C2H2_sf"/>
</dbReference>
<dbReference type="InterPro" id="IPR013087">
    <property type="entry name" value="Znf_C2H2_type"/>
</dbReference>
<dbReference type="PANTHER" id="PTHR24392:SF49">
    <property type="entry name" value="PROTEIN HUNCHBACK"/>
    <property type="match status" value="1"/>
</dbReference>
<dbReference type="PANTHER" id="PTHR24392">
    <property type="entry name" value="ZINC FINGER PROTEIN"/>
    <property type="match status" value="1"/>
</dbReference>
<dbReference type="Pfam" id="PF00096">
    <property type="entry name" value="zf-C2H2"/>
    <property type="match status" value="2"/>
</dbReference>
<dbReference type="SMART" id="SM00355">
    <property type="entry name" value="ZnF_C2H2"/>
    <property type="match status" value="6"/>
</dbReference>
<dbReference type="SUPFAM" id="SSF57667">
    <property type="entry name" value="beta-beta-alpha zinc fingers"/>
    <property type="match status" value="3"/>
</dbReference>
<dbReference type="PROSITE" id="PS00028">
    <property type="entry name" value="ZINC_FINGER_C2H2_1"/>
    <property type="match status" value="3"/>
</dbReference>
<dbReference type="PROSITE" id="PS50157">
    <property type="entry name" value="ZINC_FINGER_C2H2_2"/>
    <property type="match status" value="2"/>
</dbReference>
<protein>
    <recommendedName>
        <fullName>Protein hunchback</fullName>
    </recommendedName>
</protein>
<accession>O62537</accession>
<gene>
    <name type="primary">hb</name>
</gene>
<keyword id="KW-0217">Developmental protein</keyword>
<keyword id="KW-0238">DNA-binding</keyword>
<keyword id="KW-0302">Gap protein</keyword>
<keyword id="KW-0479">Metal-binding</keyword>
<keyword id="KW-0539">Nucleus</keyword>
<keyword id="KW-0677">Repeat</keyword>
<keyword id="KW-0862">Zinc</keyword>
<keyword id="KW-0863">Zinc-finger</keyword>
<evidence type="ECO:0000250" key="1"/>
<evidence type="ECO:0000255" key="2">
    <source>
        <dbReference type="PROSITE-ProRule" id="PRU00042"/>
    </source>
</evidence>
<evidence type="ECO:0000256" key="3">
    <source>
        <dbReference type="SAM" id="MobiDB-lite"/>
    </source>
</evidence>
<evidence type="ECO:0000305" key="4"/>
<name>HUNB_DROOR</name>
<feature type="chain" id="PRO_0000046959" description="Protein hunchback">
    <location>
        <begin position="1"/>
        <end position="767"/>
    </location>
</feature>
<feature type="zinc finger region" description="C2H2-type 1" evidence="2">
    <location>
        <begin position="242"/>
        <end position="264"/>
    </location>
</feature>
<feature type="zinc finger region" description="C2H2-type 2" evidence="2">
    <location>
        <begin position="271"/>
        <end position="293"/>
    </location>
</feature>
<feature type="zinc finger region" description="C2H2-type 3" evidence="2">
    <location>
        <begin position="299"/>
        <end position="321"/>
    </location>
</feature>
<feature type="zinc finger region" description="C2H2-type 4" evidence="2">
    <location>
        <begin position="327"/>
        <end position="351"/>
    </location>
</feature>
<feature type="zinc finger region" description="C2H2-type 5" evidence="2">
    <location>
        <begin position="714"/>
        <end position="736"/>
    </location>
</feature>
<feature type="zinc finger region" description="C2H2-type 6" evidence="2">
    <location>
        <begin position="742"/>
        <end position="766"/>
    </location>
</feature>
<feature type="region of interest" description="Disordered" evidence="3">
    <location>
        <begin position="30"/>
        <end position="51"/>
    </location>
</feature>
<feature type="region of interest" description="Disordered" evidence="3">
    <location>
        <begin position="105"/>
        <end position="127"/>
    </location>
</feature>
<feature type="region of interest" description="Disordered" evidence="3">
    <location>
        <begin position="174"/>
        <end position="212"/>
    </location>
</feature>
<feature type="region of interest" description="Disordered" evidence="3">
    <location>
        <begin position="357"/>
        <end position="424"/>
    </location>
</feature>
<feature type="region of interest" description="Disordered" evidence="3">
    <location>
        <begin position="518"/>
        <end position="570"/>
    </location>
</feature>
<feature type="region of interest" description="Disordered" evidence="3">
    <location>
        <begin position="610"/>
        <end position="704"/>
    </location>
</feature>
<feature type="compositionally biased region" description="Polar residues" evidence="3">
    <location>
        <begin position="39"/>
        <end position="51"/>
    </location>
</feature>
<feature type="compositionally biased region" description="Low complexity" evidence="3">
    <location>
        <begin position="105"/>
        <end position="117"/>
    </location>
</feature>
<feature type="compositionally biased region" description="Basic and acidic residues" evidence="3">
    <location>
        <begin position="200"/>
        <end position="212"/>
    </location>
</feature>
<feature type="compositionally biased region" description="Gly residues" evidence="3">
    <location>
        <begin position="386"/>
        <end position="397"/>
    </location>
</feature>
<feature type="compositionally biased region" description="Low complexity" evidence="3">
    <location>
        <begin position="518"/>
        <end position="527"/>
    </location>
</feature>
<feature type="compositionally biased region" description="Acidic residues" evidence="3">
    <location>
        <begin position="528"/>
        <end position="537"/>
    </location>
</feature>
<feature type="compositionally biased region" description="Low complexity" evidence="3">
    <location>
        <begin position="661"/>
        <end position="704"/>
    </location>
</feature>
<sequence>MQNWETTATTNYEQHNAWYNSMFAANIKQEPGHHLDGNSVASSPRQSPIPSTNHLEQFLKQQQQQHQHQQQPMDTLCAMTPSPSQNDQNSLQHYDANLQQQLLQQQQYQQHFQAAQQQHHHHHHLMGGFNPLTPPGLPNPMQHFYGGNLRPSPQPTPISASTVASVAVATGSSEKLQALTPPMDVTPPKSPAKSSQSNIEPEKEHDQMSNSSEDMKYMVESEDDDTNIRMPIYNSHGKMKNYKCKTCGVVAITKVDFWAHTRTHMKPDKILQCPKCPFVTEFKHHLEYHIRKHKNQKPFQCDKCSYTCVNKSMLNSHRKSHSSVYQYRCADCDYATKYCHSFKLHLRKYGHKPGMVLDEDGTPNPSLVIDVYGTRRGPKSKNGGPIASGGSGSGSGSGSRKSNVAAVAPQQQQTQPTQPPTSQLSAALQGFPLVQSNSAPPAASPLLPLPVSPAKSVASVEQTPSLPSPANLLPPLASLLQQNHNMAFFPYWNLNLQMLAAQQQAAVLAQLSPRMREQLQQQNQQQSDNEEEEQDDEYERKSVDSAMDLSQGTPVKEEEQQQLHQQQPQQPLVMNLKVEEEATPLVSSSNASRRKGRVLKLDTLLQLRSGVMTSPEQLKVPSTPMPTASSPIAGRKPMPEDHCSGTSSADESMETAHVRQANTSASSTASSSGNSSNASSNSNGNSSSNSSSSGTNSAAAAPPSGTPAAAGAIYECKYCDIFFKDAVLYTIHMGYHSCDDVFKCNMCGEKCDGPVGLFVHMARNAHS</sequence>